<keyword id="KW-0010">Activator</keyword>
<keyword id="KW-0238">DNA-binding</keyword>
<keyword id="KW-1185">Reference proteome</keyword>
<keyword id="KW-0804">Transcription</keyword>
<keyword id="KW-0805">Transcription regulation</keyword>
<evidence type="ECO:0000255" key="1">
    <source>
        <dbReference type="HAMAP-Rule" id="MF_00166"/>
    </source>
</evidence>
<reference key="1">
    <citation type="journal article" date="2003" name="Nat. Biotechnol.">
        <title>The genome sequence of the entomopathogenic bacterium Photorhabdus luminescens.</title>
        <authorList>
            <person name="Duchaud E."/>
            <person name="Rusniok C."/>
            <person name="Frangeul L."/>
            <person name="Buchrieser C."/>
            <person name="Givaudan A."/>
            <person name="Taourit S."/>
            <person name="Bocs S."/>
            <person name="Boursaux-Eude C."/>
            <person name="Chandler M."/>
            <person name="Charles J.-F."/>
            <person name="Dassa E."/>
            <person name="Derose R."/>
            <person name="Derzelle S."/>
            <person name="Freyssinet G."/>
            <person name="Gaudriault S."/>
            <person name="Medigue C."/>
            <person name="Lanois A."/>
            <person name="Powell K."/>
            <person name="Siguier P."/>
            <person name="Vincent R."/>
            <person name="Wingate V."/>
            <person name="Zouine M."/>
            <person name="Glaser P."/>
            <person name="Boemare N."/>
            <person name="Danchin A."/>
            <person name="Kunst F."/>
        </authorList>
    </citation>
    <scope>NUCLEOTIDE SEQUENCE [LARGE SCALE GENOMIC DNA]</scope>
    <source>
        <strain>DSM 15139 / CIP 105565 / TT01</strain>
    </source>
</reference>
<dbReference type="EMBL" id="BX571872">
    <property type="protein sequence ID" value="CAE16461.1"/>
    <property type="molecule type" value="Genomic_DNA"/>
</dbReference>
<dbReference type="RefSeq" id="WP_010847912.1">
    <property type="nucleotide sequence ID" value="NC_005126.1"/>
</dbReference>
<dbReference type="SMR" id="Q7N015"/>
<dbReference type="STRING" id="243265.plu4089"/>
<dbReference type="GeneID" id="97126099"/>
<dbReference type="KEGG" id="plu:plu4089"/>
<dbReference type="eggNOG" id="COG2901">
    <property type="taxonomic scope" value="Bacteria"/>
</dbReference>
<dbReference type="HOGENOM" id="CLU_158040_3_0_6"/>
<dbReference type="OrthoDB" id="9802388at2"/>
<dbReference type="Proteomes" id="UP000002514">
    <property type="component" value="Chromosome"/>
</dbReference>
<dbReference type="GO" id="GO:0003700">
    <property type="term" value="F:DNA-binding transcription factor activity"/>
    <property type="evidence" value="ECO:0007669"/>
    <property type="project" value="UniProtKB-UniRule"/>
</dbReference>
<dbReference type="GO" id="GO:0043565">
    <property type="term" value="F:sequence-specific DNA binding"/>
    <property type="evidence" value="ECO:0007669"/>
    <property type="project" value="InterPro"/>
</dbReference>
<dbReference type="FunFam" id="1.10.10.60:FF:000006">
    <property type="entry name" value="DNA-binding protein Fis"/>
    <property type="match status" value="1"/>
</dbReference>
<dbReference type="Gene3D" id="1.10.10.60">
    <property type="entry name" value="Homeodomain-like"/>
    <property type="match status" value="1"/>
</dbReference>
<dbReference type="HAMAP" id="MF_00166">
    <property type="entry name" value="DNA_binding_Fis"/>
    <property type="match status" value="1"/>
</dbReference>
<dbReference type="InterPro" id="IPR005412">
    <property type="entry name" value="Fis_DNA-bd"/>
</dbReference>
<dbReference type="InterPro" id="IPR009057">
    <property type="entry name" value="Homeodomain-like_sf"/>
</dbReference>
<dbReference type="InterPro" id="IPR002197">
    <property type="entry name" value="HTH_Fis"/>
</dbReference>
<dbReference type="InterPro" id="IPR050207">
    <property type="entry name" value="Trans_regulatory_Fis"/>
</dbReference>
<dbReference type="NCBIfam" id="NF001659">
    <property type="entry name" value="PRK00430.1"/>
    <property type="match status" value="1"/>
</dbReference>
<dbReference type="PANTHER" id="PTHR47918">
    <property type="entry name" value="DNA-BINDING PROTEIN FIS"/>
    <property type="match status" value="1"/>
</dbReference>
<dbReference type="PANTHER" id="PTHR47918:SF1">
    <property type="entry name" value="DNA-BINDING PROTEIN FIS"/>
    <property type="match status" value="1"/>
</dbReference>
<dbReference type="Pfam" id="PF02954">
    <property type="entry name" value="HTH_8"/>
    <property type="match status" value="1"/>
</dbReference>
<dbReference type="PIRSF" id="PIRSF002097">
    <property type="entry name" value="DNA-binding_Fis"/>
    <property type="match status" value="1"/>
</dbReference>
<dbReference type="PRINTS" id="PR01591">
    <property type="entry name" value="DNABINDNGFIS"/>
</dbReference>
<dbReference type="PRINTS" id="PR01590">
    <property type="entry name" value="HTHFIS"/>
</dbReference>
<dbReference type="SUPFAM" id="SSF46689">
    <property type="entry name" value="Homeodomain-like"/>
    <property type="match status" value="1"/>
</dbReference>
<organism>
    <name type="scientific">Photorhabdus laumondii subsp. laumondii (strain DSM 15139 / CIP 105565 / TT01)</name>
    <name type="common">Photorhabdus luminescens subsp. laumondii</name>
    <dbReference type="NCBI Taxonomy" id="243265"/>
    <lineage>
        <taxon>Bacteria</taxon>
        <taxon>Pseudomonadati</taxon>
        <taxon>Pseudomonadota</taxon>
        <taxon>Gammaproteobacteria</taxon>
        <taxon>Enterobacterales</taxon>
        <taxon>Morganellaceae</taxon>
        <taxon>Photorhabdus</taxon>
    </lineage>
</organism>
<proteinExistence type="inferred from homology"/>
<feature type="chain" id="PRO_0000203889" description="DNA-binding protein Fis">
    <location>
        <begin position="1"/>
        <end position="98"/>
    </location>
</feature>
<feature type="DNA-binding region" description="H-T-H motif" evidence="1">
    <location>
        <begin position="74"/>
        <end position="93"/>
    </location>
</feature>
<protein>
    <recommendedName>
        <fullName evidence="1">DNA-binding protein Fis</fullName>
    </recommendedName>
</protein>
<name>FIS_PHOLL</name>
<comment type="function">
    <text evidence="1">Activates ribosomal RNA transcription. Plays a direct role in upstream activation of rRNA promoters.</text>
</comment>
<comment type="subunit">
    <text evidence="1">Homodimer.</text>
</comment>
<comment type="similarity">
    <text evidence="1">Belongs to the transcriptional regulatory Fis family.</text>
</comment>
<accession>Q7N015</accession>
<gene>
    <name evidence="1" type="primary">fis</name>
    <name type="ordered locus">plu4089</name>
</gene>
<sequence length="98" mass="11224">MFEQRVNSDVLTVATVNSQDQVTQKPLRDSVKQALKNYFAQLNGQDVNDLYELVLAEVEQPLLDMVMQYTRGNQTRAALMMGINRGTLRKKLKKYGMN</sequence>